<proteinExistence type="inferred from homology"/>
<accession>A9MJD3</accession>
<comment type="function">
    <text evidence="1">Conversion of glycerol 3-phosphate to dihydroxyacetone. Uses fumarate or nitrate as electron acceptor.</text>
</comment>
<comment type="catalytic activity">
    <reaction evidence="1">
        <text>a quinone + sn-glycerol 3-phosphate = dihydroxyacetone phosphate + a quinol</text>
        <dbReference type="Rhea" id="RHEA:18977"/>
        <dbReference type="ChEBI" id="CHEBI:24646"/>
        <dbReference type="ChEBI" id="CHEBI:57597"/>
        <dbReference type="ChEBI" id="CHEBI:57642"/>
        <dbReference type="ChEBI" id="CHEBI:132124"/>
        <dbReference type="EC" id="1.1.5.3"/>
    </reaction>
</comment>
<comment type="cofactor">
    <cofactor evidence="1">
        <name>FMN</name>
        <dbReference type="ChEBI" id="CHEBI:58210"/>
    </cofactor>
</comment>
<comment type="pathway">
    <text evidence="1">Polyol metabolism; glycerol degradation via glycerol kinase pathway; glycerone phosphate from sn-glycerol 3-phosphate (anaerobic route): step 1/1.</text>
</comment>
<comment type="subunit">
    <text evidence="1">Composed of a catalytic GlpA/B dimer and of membrane bound GlpC.</text>
</comment>
<comment type="similarity">
    <text evidence="1">Belongs to the anaerobic G-3-P dehydrogenase subunit B family.</text>
</comment>
<protein>
    <recommendedName>
        <fullName evidence="1">Anaerobic glycerol-3-phosphate dehydrogenase subunit B</fullName>
        <shortName evidence="1">Anaerobic G-3-P dehydrogenase subunit B</shortName>
        <shortName evidence="1">Anaerobic G3Pdhase B</shortName>
        <ecNumber evidence="1">1.1.5.3</ecNumber>
    </recommendedName>
</protein>
<organism>
    <name type="scientific">Salmonella arizonae (strain ATCC BAA-731 / CDC346-86 / RSK2980)</name>
    <dbReference type="NCBI Taxonomy" id="41514"/>
    <lineage>
        <taxon>Bacteria</taxon>
        <taxon>Pseudomonadati</taxon>
        <taxon>Pseudomonadota</taxon>
        <taxon>Gammaproteobacteria</taxon>
        <taxon>Enterobacterales</taxon>
        <taxon>Enterobacteriaceae</taxon>
        <taxon>Salmonella</taxon>
    </lineage>
</organism>
<sequence length="419" mass="45784">MKFDTVIMGGGLAGLLCGLQLQQHGLRCAIVTRGQSALHFSSGSLDMLSALPDGQPVTEITAGLDTLCRQAPEHPYSRLGAQKVLTLAQQAQTLLNASGAQLYGDVQQAHQRVTPLGTLRSTWLSSPEVPVWPLFAQRICVVGVSGLLDFQAHLAAASLRQRDLNVETAEIDLPELDILRDNPTEFRAVNIARLLDNEEKWPLLYDALSPMATNCDMIIMPACFGLANDTLWRWLNERLSCALTLLPTLPPSVLGIRLHNQLQRQFVRQGGIWMPGDEVKKVTCRHGIVSEIWTRNHADIPLRPRFAVLASGSFFSSGLVAEREGIREPILGLDVQQTATRAEWYQQNFFDPQPWQQFGVVTDDAFRPSLAGNTVENLYAIGSVLAGFDPIAQGCGGGVCAVSALQAAHHIAERAGEQQ</sequence>
<dbReference type="EC" id="1.1.5.3" evidence="1"/>
<dbReference type="EMBL" id="CP000880">
    <property type="protein sequence ID" value="ABX20533.1"/>
    <property type="molecule type" value="Genomic_DNA"/>
</dbReference>
<dbReference type="STRING" id="41514.SARI_00607"/>
<dbReference type="KEGG" id="ses:SARI_00607"/>
<dbReference type="HOGENOM" id="CLU_047793_0_0_6"/>
<dbReference type="UniPathway" id="UPA00618">
    <property type="reaction ID" value="UER00673"/>
</dbReference>
<dbReference type="Proteomes" id="UP000002084">
    <property type="component" value="Chromosome"/>
</dbReference>
<dbReference type="GO" id="GO:0009331">
    <property type="term" value="C:glycerol-3-phosphate dehydrogenase (FAD) complex"/>
    <property type="evidence" value="ECO:0007669"/>
    <property type="project" value="InterPro"/>
</dbReference>
<dbReference type="GO" id="GO:0004368">
    <property type="term" value="F:glycerol-3-phosphate dehydrogenase (quinone) activity"/>
    <property type="evidence" value="ECO:0007669"/>
    <property type="project" value="UniProtKB-UniRule"/>
</dbReference>
<dbReference type="GO" id="GO:0019563">
    <property type="term" value="P:glycerol catabolic process"/>
    <property type="evidence" value="ECO:0007669"/>
    <property type="project" value="UniProtKB-UniRule"/>
</dbReference>
<dbReference type="Gene3D" id="3.50.50.60">
    <property type="entry name" value="FAD/NAD(P)-binding domain"/>
    <property type="match status" value="1"/>
</dbReference>
<dbReference type="HAMAP" id="MF_00753">
    <property type="entry name" value="Glycerol3P_GlpB"/>
    <property type="match status" value="1"/>
</dbReference>
<dbReference type="InterPro" id="IPR003953">
    <property type="entry name" value="FAD-dep_OxRdtase_2_FAD-bd"/>
</dbReference>
<dbReference type="InterPro" id="IPR036188">
    <property type="entry name" value="FAD/NAD-bd_sf"/>
</dbReference>
<dbReference type="InterPro" id="IPR009158">
    <property type="entry name" value="G3P_DH_GlpB_su"/>
</dbReference>
<dbReference type="NCBIfam" id="TIGR03378">
    <property type="entry name" value="glycerol3P_GlpB"/>
    <property type="match status" value="1"/>
</dbReference>
<dbReference type="NCBIfam" id="NF003718">
    <property type="entry name" value="PRK05329.1-1"/>
    <property type="match status" value="1"/>
</dbReference>
<dbReference type="NCBIfam" id="NF003719">
    <property type="entry name" value="PRK05329.1-2"/>
    <property type="match status" value="1"/>
</dbReference>
<dbReference type="NCBIfam" id="NF003720">
    <property type="entry name" value="PRK05329.1-3"/>
    <property type="match status" value="1"/>
</dbReference>
<dbReference type="Pfam" id="PF00890">
    <property type="entry name" value="FAD_binding_2"/>
    <property type="match status" value="1"/>
</dbReference>
<dbReference type="PIRSF" id="PIRSF000141">
    <property type="entry name" value="Anaerobic_G3P_dh"/>
    <property type="match status" value="1"/>
</dbReference>
<dbReference type="SUPFAM" id="SSF51905">
    <property type="entry name" value="FAD/NAD(P)-binding domain"/>
    <property type="match status" value="1"/>
</dbReference>
<name>GLPB_SALAR</name>
<reference key="1">
    <citation type="submission" date="2007-11" db="EMBL/GenBank/DDBJ databases">
        <authorList>
            <consortium name="The Salmonella enterica serovar Arizonae Genome Sequencing Project"/>
            <person name="McClelland M."/>
            <person name="Sanderson E.K."/>
            <person name="Porwollik S."/>
            <person name="Spieth J."/>
            <person name="Clifton W.S."/>
            <person name="Fulton R."/>
            <person name="Chunyan W."/>
            <person name="Wollam A."/>
            <person name="Shah N."/>
            <person name="Pepin K."/>
            <person name="Bhonagiri V."/>
            <person name="Nash W."/>
            <person name="Johnson M."/>
            <person name="Thiruvilangam P."/>
            <person name="Wilson R."/>
        </authorList>
    </citation>
    <scope>NUCLEOTIDE SEQUENCE [LARGE SCALE GENOMIC DNA]</scope>
    <source>
        <strain>ATCC BAA-731 / CDC346-86 / RSK2980</strain>
    </source>
</reference>
<keyword id="KW-0285">Flavoprotein</keyword>
<keyword id="KW-0288">FMN</keyword>
<keyword id="KW-0560">Oxidoreductase</keyword>
<keyword id="KW-1185">Reference proteome</keyword>
<feature type="chain" id="PRO_1000083502" description="Anaerobic glycerol-3-phosphate dehydrogenase subunit B">
    <location>
        <begin position="1"/>
        <end position="419"/>
    </location>
</feature>
<evidence type="ECO:0000255" key="1">
    <source>
        <dbReference type="HAMAP-Rule" id="MF_00753"/>
    </source>
</evidence>
<gene>
    <name evidence="1" type="primary">glpB</name>
    <name type="ordered locus">SARI_00607</name>
</gene>